<feature type="chain" id="PRO_0000111721" description="Regulatory protein AsnC">
    <location>
        <begin position="1"/>
        <end position="152"/>
    </location>
</feature>
<feature type="domain" description="HTH asnC-type" evidence="2">
    <location>
        <begin position="6"/>
        <end position="67"/>
    </location>
</feature>
<feature type="DNA-binding region" description="H-T-H motif" evidence="2">
    <location>
        <begin position="25"/>
        <end position="44"/>
    </location>
</feature>
<organism>
    <name type="scientific">Escherichia coli O6:H1 (strain CFT073 / ATCC 700928 / UPEC)</name>
    <dbReference type="NCBI Taxonomy" id="199310"/>
    <lineage>
        <taxon>Bacteria</taxon>
        <taxon>Pseudomonadati</taxon>
        <taxon>Pseudomonadota</taxon>
        <taxon>Gammaproteobacteria</taxon>
        <taxon>Enterobacterales</taxon>
        <taxon>Enterobacteriaceae</taxon>
        <taxon>Escherichia</taxon>
    </lineage>
</organism>
<proteinExistence type="inferred from homology"/>
<name>ASNC_ECOL6</name>
<comment type="function">
    <text evidence="1">Activator of asnA transcription; autogenous regulator of its own transcription; and repressor of the expression of gidA at a post-transcriptional level.</text>
</comment>
<accession>P0ACI7</accession>
<accession>P03809</accession>
<keyword id="KW-0010">Activator</keyword>
<keyword id="KW-0238">DNA-binding</keyword>
<keyword id="KW-1185">Reference proteome</keyword>
<keyword id="KW-0804">Transcription</keyword>
<keyword id="KW-0805">Transcription regulation</keyword>
<reference key="1">
    <citation type="journal article" date="2002" name="Proc. Natl. Acad. Sci. U.S.A.">
        <title>Extensive mosaic structure revealed by the complete genome sequence of uropathogenic Escherichia coli.</title>
        <authorList>
            <person name="Welch R.A."/>
            <person name="Burland V."/>
            <person name="Plunkett G. III"/>
            <person name="Redford P."/>
            <person name="Roesch P."/>
            <person name="Rasko D."/>
            <person name="Buckles E.L."/>
            <person name="Liou S.-R."/>
            <person name="Boutin A."/>
            <person name="Hackett J."/>
            <person name="Stroud D."/>
            <person name="Mayhew G.F."/>
            <person name="Rose D.J."/>
            <person name="Zhou S."/>
            <person name="Schwartz D.C."/>
            <person name="Perna N.T."/>
            <person name="Mobley H.L.T."/>
            <person name="Donnenberg M.S."/>
            <person name="Blattner F.R."/>
        </authorList>
    </citation>
    <scope>NUCLEOTIDE SEQUENCE [LARGE SCALE GENOMIC DNA]</scope>
    <source>
        <strain>CFT073 / ATCC 700928 / UPEC</strain>
    </source>
</reference>
<protein>
    <recommendedName>
        <fullName>Regulatory protein AsnC</fullName>
    </recommendedName>
</protein>
<evidence type="ECO:0000250" key="1"/>
<evidence type="ECO:0000255" key="2">
    <source>
        <dbReference type="PROSITE-ProRule" id="PRU00319"/>
    </source>
</evidence>
<dbReference type="EMBL" id="AE014075">
    <property type="protein sequence ID" value="AAN83103.1"/>
    <property type="molecule type" value="Genomic_DNA"/>
</dbReference>
<dbReference type="RefSeq" id="WP_000432970.1">
    <property type="nucleotide sequence ID" value="NZ_CP051263.1"/>
</dbReference>
<dbReference type="SMR" id="P0ACI7"/>
<dbReference type="STRING" id="199310.c4671"/>
<dbReference type="GeneID" id="86861851"/>
<dbReference type="KEGG" id="ecc:c4671"/>
<dbReference type="eggNOG" id="COG1522">
    <property type="taxonomic scope" value="Bacteria"/>
</dbReference>
<dbReference type="HOGENOM" id="CLU_091233_5_0_6"/>
<dbReference type="BioCyc" id="ECOL199310:C4671-MONOMER"/>
<dbReference type="Proteomes" id="UP000001410">
    <property type="component" value="Chromosome"/>
</dbReference>
<dbReference type="GO" id="GO:0005829">
    <property type="term" value="C:cytosol"/>
    <property type="evidence" value="ECO:0007669"/>
    <property type="project" value="TreeGrafter"/>
</dbReference>
<dbReference type="GO" id="GO:0043565">
    <property type="term" value="F:sequence-specific DNA binding"/>
    <property type="evidence" value="ECO:0007669"/>
    <property type="project" value="InterPro"/>
</dbReference>
<dbReference type="GO" id="GO:0006355">
    <property type="term" value="P:regulation of DNA-templated transcription"/>
    <property type="evidence" value="ECO:0007669"/>
    <property type="project" value="UniProtKB-ARBA"/>
</dbReference>
<dbReference type="GO" id="GO:0043200">
    <property type="term" value="P:response to amino acid"/>
    <property type="evidence" value="ECO:0007669"/>
    <property type="project" value="TreeGrafter"/>
</dbReference>
<dbReference type="CDD" id="cd00090">
    <property type="entry name" value="HTH_ARSR"/>
    <property type="match status" value="1"/>
</dbReference>
<dbReference type="FunFam" id="1.10.10.10:FF:000078">
    <property type="entry name" value="Transcriptional regulator AsnC"/>
    <property type="match status" value="1"/>
</dbReference>
<dbReference type="FunFam" id="3.30.70.920:FF:000002">
    <property type="entry name" value="Transcriptional regulator AsnC"/>
    <property type="match status" value="1"/>
</dbReference>
<dbReference type="Gene3D" id="3.30.70.920">
    <property type="match status" value="1"/>
</dbReference>
<dbReference type="Gene3D" id="1.10.10.10">
    <property type="entry name" value="Winged helix-like DNA-binding domain superfamily/Winged helix DNA-binding domain"/>
    <property type="match status" value="1"/>
</dbReference>
<dbReference type="InterPro" id="IPR011991">
    <property type="entry name" value="ArsR-like_HTH"/>
</dbReference>
<dbReference type="InterPro" id="IPR000485">
    <property type="entry name" value="AsnC-type_HTH_dom"/>
</dbReference>
<dbReference type="InterPro" id="IPR011008">
    <property type="entry name" value="Dimeric_a/b-barrel"/>
</dbReference>
<dbReference type="InterPro" id="IPR019888">
    <property type="entry name" value="Tscrpt_reg_AsnC-like"/>
</dbReference>
<dbReference type="InterPro" id="IPR019887">
    <property type="entry name" value="Tscrpt_reg_AsnC/Lrp_C"/>
</dbReference>
<dbReference type="InterPro" id="IPR019885">
    <property type="entry name" value="Tscrpt_reg_HTH_AsnC-type_CS"/>
</dbReference>
<dbReference type="InterPro" id="IPR036388">
    <property type="entry name" value="WH-like_DNA-bd_sf"/>
</dbReference>
<dbReference type="InterPro" id="IPR036390">
    <property type="entry name" value="WH_DNA-bd_sf"/>
</dbReference>
<dbReference type="NCBIfam" id="NF008384">
    <property type="entry name" value="PRK11179.1"/>
    <property type="match status" value="1"/>
</dbReference>
<dbReference type="PANTHER" id="PTHR30154">
    <property type="entry name" value="LEUCINE-RESPONSIVE REGULATORY PROTEIN"/>
    <property type="match status" value="1"/>
</dbReference>
<dbReference type="PANTHER" id="PTHR30154:SF34">
    <property type="entry name" value="TRANSCRIPTIONAL REGULATOR AZLB"/>
    <property type="match status" value="1"/>
</dbReference>
<dbReference type="Pfam" id="PF01037">
    <property type="entry name" value="AsnC_trans_reg"/>
    <property type="match status" value="1"/>
</dbReference>
<dbReference type="Pfam" id="PF13412">
    <property type="entry name" value="HTH_24"/>
    <property type="match status" value="1"/>
</dbReference>
<dbReference type="PRINTS" id="PR00033">
    <property type="entry name" value="HTHASNC"/>
</dbReference>
<dbReference type="SMART" id="SM00344">
    <property type="entry name" value="HTH_ASNC"/>
    <property type="match status" value="1"/>
</dbReference>
<dbReference type="SUPFAM" id="SSF54909">
    <property type="entry name" value="Dimeric alpha+beta barrel"/>
    <property type="match status" value="1"/>
</dbReference>
<dbReference type="SUPFAM" id="SSF46785">
    <property type="entry name" value="Winged helix' DNA-binding domain"/>
    <property type="match status" value="1"/>
</dbReference>
<dbReference type="PROSITE" id="PS00519">
    <property type="entry name" value="HTH_ASNC_1"/>
    <property type="match status" value="1"/>
</dbReference>
<dbReference type="PROSITE" id="PS50956">
    <property type="entry name" value="HTH_ASNC_2"/>
    <property type="match status" value="1"/>
</dbReference>
<gene>
    <name type="primary">asnC</name>
    <name type="ordered locus">c4671</name>
</gene>
<sequence length="152" mass="16888">MENYLIDNLDRGILEALMGNARTAYAELAKQFGVSPGTIHVRVEKMKQAGIITGARIDVSPKQLGYDVGCFIGIILKSAKDYPSALAKLESLDEVTEAYYTTGHYSIFIKVMCRSIDALQHVLINKIQTIDEIQSTETLIVLQNPIMRTIKP</sequence>